<reference key="1">
    <citation type="journal article" date="2000" name="Nature">
        <title>Sequence and analysis of chromosome 1 of the plant Arabidopsis thaliana.</title>
        <authorList>
            <person name="Theologis A."/>
            <person name="Ecker J.R."/>
            <person name="Palm C.J."/>
            <person name="Federspiel N.A."/>
            <person name="Kaul S."/>
            <person name="White O."/>
            <person name="Alonso J."/>
            <person name="Altafi H."/>
            <person name="Araujo R."/>
            <person name="Bowman C.L."/>
            <person name="Brooks S.Y."/>
            <person name="Buehler E."/>
            <person name="Chan A."/>
            <person name="Chao Q."/>
            <person name="Chen H."/>
            <person name="Cheuk R.F."/>
            <person name="Chin C.W."/>
            <person name="Chung M.K."/>
            <person name="Conn L."/>
            <person name="Conway A.B."/>
            <person name="Conway A.R."/>
            <person name="Creasy T.H."/>
            <person name="Dewar K."/>
            <person name="Dunn P."/>
            <person name="Etgu P."/>
            <person name="Feldblyum T.V."/>
            <person name="Feng J.-D."/>
            <person name="Fong B."/>
            <person name="Fujii C.Y."/>
            <person name="Gill J.E."/>
            <person name="Goldsmith A.D."/>
            <person name="Haas B."/>
            <person name="Hansen N.F."/>
            <person name="Hughes B."/>
            <person name="Huizar L."/>
            <person name="Hunter J.L."/>
            <person name="Jenkins J."/>
            <person name="Johnson-Hopson C."/>
            <person name="Khan S."/>
            <person name="Khaykin E."/>
            <person name="Kim C.J."/>
            <person name="Koo H.L."/>
            <person name="Kremenetskaia I."/>
            <person name="Kurtz D.B."/>
            <person name="Kwan A."/>
            <person name="Lam B."/>
            <person name="Langin-Hooper S."/>
            <person name="Lee A."/>
            <person name="Lee J.M."/>
            <person name="Lenz C.A."/>
            <person name="Li J.H."/>
            <person name="Li Y.-P."/>
            <person name="Lin X."/>
            <person name="Liu S.X."/>
            <person name="Liu Z.A."/>
            <person name="Luros J.S."/>
            <person name="Maiti R."/>
            <person name="Marziali A."/>
            <person name="Militscher J."/>
            <person name="Miranda M."/>
            <person name="Nguyen M."/>
            <person name="Nierman W.C."/>
            <person name="Osborne B.I."/>
            <person name="Pai G."/>
            <person name="Peterson J."/>
            <person name="Pham P.K."/>
            <person name="Rizzo M."/>
            <person name="Rooney T."/>
            <person name="Rowley D."/>
            <person name="Sakano H."/>
            <person name="Salzberg S.L."/>
            <person name="Schwartz J.R."/>
            <person name="Shinn P."/>
            <person name="Southwick A.M."/>
            <person name="Sun H."/>
            <person name="Tallon L.J."/>
            <person name="Tambunga G."/>
            <person name="Toriumi M.J."/>
            <person name="Town C.D."/>
            <person name="Utterback T."/>
            <person name="Van Aken S."/>
            <person name="Vaysberg M."/>
            <person name="Vysotskaia V.S."/>
            <person name="Walker M."/>
            <person name="Wu D."/>
            <person name="Yu G."/>
            <person name="Fraser C.M."/>
            <person name="Venter J.C."/>
            <person name="Davis R.W."/>
        </authorList>
    </citation>
    <scope>NUCLEOTIDE SEQUENCE [LARGE SCALE GENOMIC DNA]</scope>
    <source>
        <strain>cv. Columbia</strain>
    </source>
</reference>
<reference key="2">
    <citation type="journal article" date="2017" name="Plant J.">
        <title>Araport11: a complete reannotation of the Arabidopsis thaliana reference genome.</title>
        <authorList>
            <person name="Cheng C.Y."/>
            <person name="Krishnakumar V."/>
            <person name="Chan A.P."/>
            <person name="Thibaud-Nissen F."/>
            <person name="Schobel S."/>
            <person name="Town C.D."/>
        </authorList>
    </citation>
    <scope>GENOME REANNOTATION</scope>
    <source>
        <strain>cv. Columbia</strain>
    </source>
</reference>
<reference key="3">
    <citation type="journal article" date="2004" name="Genome Res.">
        <title>Whole genome sequence comparisons and 'full-length' cDNA sequences: a combined approach to evaluate and improve Arabidopsis genome annotation.</title>
        <authorList>
            <person name="Castelli V."/>
            <person name="Aury J.-M."/>
            <person name="Jaillon O."/>
            <person name="Wincker P."/>
            <person name="Clepet C."/>
            <person name="Menard M."/>
            <person name="Cruaud C."/>
            <person name="Quetier F."/>
            <person name="Scarpelli C."/>
            <person name="Schaechter V."/>
            <person name="Temple G."/>
            <person name="Caboche M."/>
            <person name="Weissenbach J."/>
            <person name="Salanoubat M."/>
        </authorList>
    </citation>
    <scope>NUCLEOTIDE SEQUENCE [LARGE SCALE MRNA]</scope>
    <source>
        <strain>cv. Columbia</strain>
    </source>
</reference>
<reference key="4">
    <citation type="journal article" date="2001" name="Proc. Natl. Acad. Sci. U.S.A.">
        <title>Receptor-like kinases from Arabidopsis form a monophyletic gene family related to animal receptor kinases.</title>
        <authorList>
            <person name="Shiu S.H."/>
            <person name="Bleecker A.B."/>
        </authorList>
    </citation>
    <scope>GENE FAMILY</scope>
</reference>
<reference key="5">
    <citation type="journal article" date="2003" name="Plant Physiol.">
        <title>Expansion of the receptor-like kinase/Pelle gene family and receptor-like proteins in Arabidopsis.</title>
        <authorList>
            <person name="Shiu S.H."/>
            <person name="Bleecker A.B."/>
        </authorList>
    </citation>
    <scope>GENE FAMILY</scope>
</reference>
<organism>
    <name type="scientific">Arabidopsis thaliana</name>
    <name type="common">Mouse-ear cress</name>
    <dbReference type="NCBI Taxonomy" id="3702"/>
    <lineage>
        <taxon>Eukaryota</taxon>
        <taxon>Viridiplantae</taxon>
        <taxon>Streptophyta</taxon>
        <taxon>Embryophyta</taxon>
        <taxon>Tracheophyta</taxon>
        <taxon>Spermatophyta</taxon>
        <taxon>Magnoliopsida</taxon>
        <taxon>eudicotyledons</taxon>
        <taxon>Gunneridae</taxon>
        <taxon>Pentapetalae</taxon>
        <taxon>rosids</taxon>
        <taxon>malvids</taxon>
        <taxon>Brassicales</taxon>
        <taxon>Brassicaceae</taxon>
        <taxon>Camelineae</taxon>
        <taxon>Arabidopsis</taxon>
    </lineage>
</organism>
<evidence type="ECO:0000250" key="1">
    <source>
        <dbReference type="UniProtKB" id="P0C5E2"/>
    </source>
</evidence>
<evidence type="ECO:0000255" key="2"/>
<evidence type="ECO:0000255" key="3">
    <source>
        <dbReference type="PROSITE-ProRule" id="PRU00159"/>
    </source>
</evidence>
<evidence type="ECO:0000255" key="4">
    <source>
        <dbReference type="PROSITE-ProRule" id="PRU00498"/>
    </source>
</evidence>
<evidence type="ECO:0000256" key="5">
    <source>
        <dbReference type="SAM" id="MobiDB-lite"/>
    </source>
</evidence>
<evidence type="ECO:0000303" key="6">
    <source>
    </source>
</evidence>
<evidence type="ECO:0000305" key="7"/>
<evidence type="ECO:0000312" key="8">
    <source>
        <dbReference type="Araport" id="AT1G66880"/>
    </source>
</evidence>
<evidence type="ECO:0000312" key="9">
    <source>
        <dbReference type="EMBL" id="AAG50588.1"/>
    </source>
</evidence>
<evidence type="ECO:0000312" key="10">
    <source>
        <dbReference type="EMBL" id="AAG60067.1"/>
    </source>
</evidence>
<proteinExistence type="evidence at transcript level"/>
<feature type="signal peptide" evidence="2">
    <location>
        <begin position="1"/>
        <end position="25"/>
    </location>
</feature>
<feature type="chain" id="PRO_0000435826" description="LEAF RUST 10 DISEASE-RESISTANCE LOCUS RECEPTOR-LIKE PROTEIN KINASE-like 1.4">
    <location>
        <begin position="26"/>
        <end position="663"/>
    </location>
</feature>
<feature type="topological domain" description="Extracellular" evidence="7">
    <location>
        <begin position="26"/>
        <end position="241"/>
    </location>
</feature>
<feature type="transmembrane region" description="Helical" evidence="2">
    <location>
        <begin position="242"/>
        <end position="262"/>
    </location>
</feature>
<feature type="topological domain" description="Cytoplasmic" evidence="7">
    <location>
        <begin position="263"/>
        <end position="663"/>
    </location>
</feature>
<feature type="domain" description="Protein kinase" evidence="3">
    <location>
        <begin position="334"/>
        <end position="609"/>
    </location>
</feature>
<feature type="region of interest" description="Disordered" evidence="5">
    <location>
        <begin position="282"/>
        <end position="304"/>
    </location>
</feature>
<feature type="region of interest" description="Disordered" evidence="5">
    <location>
        <begin position="637"/>
        <end position="663"/>
    </location>
</feature>
<feature type="compositionally biased region" description="Low complexity" evidence="5">
    <location>
        <begin position="290"/>
        <end position="304"/>
    </location>
</feature>
<feature type="compositionally biased region" description="Polar residues" evidence="5">
    <location>
        <begin position="653"/>
        <end position="663"/>
    </location>
</feature>
<feature type="active site" description="Proton acceptor" evidence="3">
    <location>
        <position position="458"/>
    </location>
</feature>
<feature type="binding site" evidence="3">
    <location>
        <begin position="340"/>
        <end position="348"/>
    </location>
    <ligand>
        <name>ATP</name>
        <dbReference type="ChEBI" id="CHEBI:30616"/>
    </ligand>
</feature>
<feature type="binding site" evidence="3">
    <location>
        <position position="362"/>
    </location>
    <ligand>
        <name>ATP</name>
        <dbReference type="ChEBI" id="CHEBI:30616"/>
    </ligand>
</feature>
<feature type="glycosylation site" description="N-linked (GlcNAc...) asparagine" evidence="4">
    <location>
        <position position="36"/>
    </location>
</feature>
<feature type="glycosylation site" description="N-linked (GlcNAc...) asparagine" evidence="4">
    <location>
        <position position="64"/>
    </location>
</feature>
<feature type="glycosylation site" description="N-linked (GlcNAc...) asparagine" evidence="4">
    <location>
        <position position="106"/>
    </location>
</feature>
<feature type="glycosylation site" description="N-linked (GlcNAc...) asparagine" evidence="4">
    <location>
        <position position="137"/>
    </location>
</feature>
<feature type="glycosylation site" description="N-linked (GlcNAc...) asparagine" evidence="4">
    <location>
        <position position="208"/>
    </location>
</feature>
<keyword id="KW-0067">ATP-binding</keyword>
<keyword id="KW-1003">Cell membrane</keyword>
<keyword id="KW-0325">Glycoprotein</keyword>
<keyword id="KW-0418">Kinase</keyword>
<keyword id="KW-0472">Membrane</keyword>
<keyword id="KW-0547">Nucleotide-binding</keyword>
<keyword id="KW-0675">Receptor</keyword>
<keyword id="KW-1185">Reference proteome</keyword>
<keyword id="KW-0723">Serine/threonine-protein kinase</keyword>
<keyword id="KW-0732">Signal</keyword>
<keyword id="KW-0808">Transferase</keyword>
<keyword id="KW-0812">Transmembrane</keyword>
<keyword id="KW-1133">Transmembrane helix</keyword>
<name>LRL14_ARATH</name>
<protein>
    <recommendedName>
        <fullName evidence="6">LEAF RUST 10 DISEASE-RESISTANCE LOCUS RECEPTOR-LIKE PROTEIN KINASE-like 1.4</fullName>
        <ecNumber>2.7.11.1</ecNumber>
    </recommendedName>
    <alternativeName>
        <fullName evidence="7">Probable receptor-like serine/threonine-protein kinase LRK10L-1.4</fullName>
    </alternativeName>
</protein>
<sequence>MYYPLSSSLMFFILFSLFYHLPCESSKCESLFQCGNITASFPFWGGDRHKHCGHPLLELRCDQNKSTSLFISDQEFFVLHVDQTSYSLTLARPDLLHSFCSLTFTNTTLPPEIFELSPAYKSVTFYHCYPVLPDLSNYTCPVIGPISVSGNPEDHETCFPNFAANVPTSFVTKEKKLNIANLESVLEKGFEVNMNVIMKACQACSYSNESCGFDENFPFEVKCKPHHSPTDTSLSIGAKAGIAVASVSGLAILLLAGLFLCIRRRRKTQDAQYTSKSLPITSYSSRDTSRNPTSTTISSSSNHSLLPSISNLANRSDYCGVQVFSYEELEEATENFSRELGDGGFGTVYYGVLKDGRAVAVKRLYERSLKRVEQFKNEIEILKSLKHPNLVILYGCTSRHSRELLLVYEYISNGTLAEHLHGNRAEARPLCWSTRLNIAIETASALSFLHIKGIIHRDIKTTNILLDDNYQVKVADFGLSRLFPMDQTHISTAPQGTPGYVDPEYYQCYQLNEKSDVYSFGVVLTELISSKEAVDITRHRHDINLANMAVSKIQNNALHELVDSSLGYDNDPEVRRKMMAVAELAFRCLQQERDVRPAMDEIVEILRGIKDDEKKRVLVKSPDVVDIECGGGDDVGLLRNSVPPPISPETDKWTSSSDTAASL</sequence>
<accession>F4HQ17</accession>
<accession>Q9C617</accession>
<accession>Q9C9P0</accession>
<comment type="catalytic activity">
    <reaction>
        <text>L-seryl-[protein] + ATP = O-phospho-L-seryl-[protein] + ADP + H(+)</text>
        <dbReference type="Rhea" id="RHEA:17989"/>
        <dbReference type="Rhea" id="RHEA-COMP:9863"/>
        <dbReference type="Rhea" id="RHEA-COMP:11604"/>
        <dbReference type="ChEBI" id="CHEBI:15378"/>
        <dbReference type="ChEBI" id="CHEBI:29999"/>
        <dbReference type="ChEBI" id="CHEBI:30616"/>
        <dbReference type="ChEBI" id="CHEBI:83421"/>
        <dbReference type="ChEBI" id="CHEBI:456216"/>
        <dbReference type="EC" id="2.7.11.1"/>
    </reaction>
</comment>
<comment type="catalytic activity">
    <reaction>
        <text>L-threonyl-[protein] + ATP = O-phospho-L-threonyl-[protein] + ADP + H(+)</text>
        <dbReference type="Rhea" id="RHEA:46608"/>
        <dbReference type="Rhea" id="RHEA-COMP:11060"/>
        <dbReference type="Rhea" id="RHEA-COMP:11605"/>
        <dbReference type="ChEBI" id="CHEBI:15378"/>
        <dbReference type="ChEBI" id="CHEBI:30013"/>
        <dbReference type="ChEBI" id="CHEBI:30616"/>
        <dbReference type="ChEBI" id="CHEBI:61977"/>
        <dbReference type="ChEBI" id="CHEBI:456216"/>
        <dbReference type="EC" id="2.7.11.1"/>
    </reaction>
</comment>
<comment type="subcellular location">
    <subcellularLocation>
        <location evidence="1">Cell membrane</location>
        <topology evidence="7">Single-pass type I membrane protein</topology>
    </subcellularLocation>
</comment>
<comment type="similarity">
    <text evidence="3">Belongs to the protein kinase superfamily. Ser/Thr protein kinase family.</text>
</comment>
<comment type="sequence caution" evidence="7">
    <conflict type="erroneous gene model prediction">
        <sequence resource="EMBL-CDS" id="AAG50588"/>
    </conflict>
</comment>
<comment type="sequence caution" evidence="7">
    <conflict type="erroneous gene model prediction">
        <sequence resource="EMBL-CDS" id="AAG60067"/>
    </conflict>
</comment>
<comment type="sequence caution" evidence="7">
    <conflict type="erroneous gene model prediction">
        <sequence resource="EMBL-CDS" id="AEE34567"/>
    </conflict>
</comment>
<gene>
    <name evidence="6" type="primary">LRK10L-1.4</name>
    <name evidence="8" type="ordered locus">At1g66880</name>
    <name evidence="10" type="ORF">F4N21.1</name>
    <name evidence="9" type="ORF">T4O24.5</name>
</gene>
<dbReference type="EC" id="2.7.11.1"/>
<dbReference type="EMBL" id="AC013288">
    <property type="protein sequence ID" value="AAG60067.1"/>
    <property type="status" value="ALT_SEQ"/>
    <property type="molecule type" value="Genomic_DNA"/>
</dbReference>
<dbReference type="EMBL" id="AC083891">
    <property type="protein sequence ID" value="AAG50588.1"/>
    <property type="status" value="ALT_SEQ"/>
    <property type="molecule type" value="Genomic_DNA"/>
</dbReference>
<dbReference type="EMBL" id="CP002684">
    <property type="protein sequence ID" value="AEE34567.1"/>
    <property type="status" value="ALT_SEQ"/>
    <property type="molecule type" value="Genomic_DNA"/>
</dbReference>
<dbReference type="EMBL" id="BX814972">
    <property type="status" value="NOT_ANNOTATED_CDS"/>
    <property type="molecule type" value="mRNA"/>
</dbReference>
<dbReference type="PIR" id="E96692">
    <property type="entry name" value="E96692"/>
</dbReference>
<dbReference type="RefSeq" id="NP_176860.2">
    <property type="nucleotide sequence ID" value="NM_105359.3"/>
</dbReference>
<dbReference type="SMR" id="F4HQ17"/>
<dbReference type="FunCoup" id="F4HQ17">
    <property type="interactions" value="371"/>
</dbReference>
<dbReference type="STRING" id="3702.F4HQ17"/>
<dbReference type="GlyCosmos" id="F4HQ17">
    <property type="glycosylation" value="5 sites, No reported glycans"/>
</dbReference>
<dbReference type="GlyGen" id="F4HQ17">
    <property type="glycosylation" value="6 sites"/>
</dbReference>
<dbReference type="PeptideAtlas" id="F4HQ17"/>
<dbReference type="ProteomicsDB" id="238736"/>
<dbReference type="GeneID" id="843006"/>
<dbReference type="KEGG" id="ath:AT1G66880"/>
<dbReference type="Araport" id="AT1G66880"/>
<dbReference type="TAIR" id="AT1G66880"/>
<dbReference type="eggNOG" id="KOG1187">
    <property type="taxonomic scope" value="Eukaryota"/>
</dbReference>
<dbReference type="HOGENOM" id="CLU_000288_115_3_1"/>
<dbReference type="InParanoid" id="F4HQ17"/>
<dbReference type="PRO" id="PR:F4HQ17"/>
<dbReference type="Proteomes" id="UP000006548">
    <property type="component" value="Chromosome 1"/>
</dbReference>
<dbReference type="ExpressionAtlas" id="F4HQ17">
    <property type="expression patterns" value="baseline and differential"/>
</dbReference>
<dbReference type="GO" id="GO:0005886">
    <property type="term" value="C:plasma membrane"/>
    <property type="evidence" value="ECO:0007669"/>
    <property type="project" value="UniProtKB-SubCell"/>
</dbReference>
<dbReference type="GO" id="GO:0005524">
    <property type="term" value="F:ATP binding"/>
    <property type="evidence" value="ECO:0007669"/>
    <property type="project" value="UniProtKB-KW"/>
</dbReference>
<dbReference type="GO" id="GO:0030247">
    <property type="term" value="F:polysaccharide binding"/>
    <property type="evidence" value="ECO:0007669"/>
    <property type="project" value="InterPro"/>
</dbReference>
<dbReference type="GO" id="GO:0106310">
    <property type="term" value="F:protein serine kinase activity"/>
    <property type="evidence" value="ECO:0007669"/>
    <property type="project" value="RHEA"/>
</dbReference>
<dbReference type="GO" id="GO:0004674">
    <property type="term" value="F:protein serine/threonine kinase activity"/>
    <property type="evidence" value="ECO:0007669"/>
    <property type="project" value="UniProtKB-KW"/>
</dbReference>
<dbReference type="GO" id="GO:0071456">
    <property type="term" value="P:cellular response to hypoxia"/>
    <property type="evidence" value="ECO:0007007"/>
    <property type="project" value="TAIR"/>
</dbReference>
<dbReference type="FunFam" id="3.30.200.20:FF:000162">
    <property type="entry name" value="Adenine nucleotide alpha hydrolase-like domain kinase"/>
    <property type="match status" value="1"/>
</dbReference>
<dbReference type="FunFam" id="1.10.510.10:FF:000161">
    <property type="entry name" value="Wall-associated receptor kinase-like 20"/>
    <property type="match status" value="1"/>
</dbReference>
<dbReference type="Gene3D" id="3.30.200.20">
    <property type="entry name" value="Phosphorylase Kinase, domain 1"/>
    <property type="match status" value="1"/>
</dbReference>
<dbReference type="Gene3D" id="1.10.510.10">
    <property type="entry name" value="Transferase(Phosphotransferase) domain 1"/>
    <property type="match status" value="1"/>
</dbReference>
<dbReference type="InterPro" id="IPR011009">
    <property type="entry name" value="Kinase-like_dom_sf"/>
</dbReference>
<dbReference type="InterPro" id="IPR000719">
    <property type="entry name" value="Prot_kinase_dom"/>
</dbReference>
<dbReference type="InterPro" id="IPR017441">
    <property type="entry name" value="Protein_kinase_ATP_BS"/>
</dbReference>
<dbReference type="InterPro" id="IPR001245">
    <property type="entry name" value="Ser-Thr/Tyr_kinase_cat_dom"/>
</dbReference>
<dbReference type="InterPro" id="IPR008271">
    <property type="entry name" value="Ser/Thr_kinase_AS"/>
</dbReference>
<dbReference type="InterPro" id="IPR032872">
    <property type="entry name" value="WAK_assoc_C"/>
</dbReference>
<dbReference type="InterPro" id="IPR025287">
    <property type="entry name" value="WAK_GUB"/>
</dbReference>
<dbReference type="PANTHER" id="PTHR46008">
    <property type="entry name" value="LEAF RUST 10 DISEASE-RESISTANCE LOCUS RECEPTOR-LIKE PROTEIN KINASE-LIKE 1.4"/>
    <property type="match status" value="1"/>
</dbReference>
<dbReference type="PANTHER" id="PTHR46008:SF2">
    <property type="entry name" value="LEAF RUST 10 DISEASE-RESISTANCE LOCUS RECEPTOR-LIKE PROTEIN KINASE-LIKE 1.4"/>
    <property type="match status" value="1"/>
</dbReference>
<dbReference type="Pfam" id="PF13947">
    <property type="entry name" value="GUB_WAK_bind"/>
    <property type="match status" value="1"/>
</dbReference>
<dbReference type="Pfam" id="PF07714">
    <property type="entry name" value="PK_Tyr_Ser-Thr"/>
    <property type="match status" value="1"/>
</dbReference>
<dbReference type="Pfam" id="PF14380">
    <property type="entry name" value="WAK_assoc"/>
    <property type="match status" value="1"/>
</dbReference>
<dbReference type="SMART" id="SM00220">
    <property type="entry name" value="S_TKc"/>
    <property type="match status" value="1"/>
</dbReference>
<dbReference type="SUPFAM" id="SSF56112">
    <property type="entry name" value="Protein kinase-like (PK-like)"/>
    <property type="match status" value="1"/>
</dbReference>
<dbReference type="PROSITE" id="PS00107">
    <property type="entry name" value="PROTEIN_KINASE_ATP"/>
    <property type="match status" value="1"/>
</dbReference>
<dbReference type="PROSITE" id="PS50011">
    <property type="entry name" value="PROTEIN_KINASE_DOM"/>
    <property type="match status" value="1"/>
</dbReference>
<dbReference type="PROSITE" id="PS00108">
    <property type="entry name" value="PROTEIN_KINASE_ST"/>
    <property type="match status" value="1"/>
</dbReference>